<sequence>MTIPTSISGFPRIGRDRELKKAIEAYWKGNATLDDVRETGRELRVRHWRLEKDAGIDLIPSNDFSLYDQMLDTAVLLNVIPARYRRLGFDNPEETLFAMARGYQGERGDVTALPMKKWFTTNYHYLVPEFDSSTEVRLNGTKPFDEYLEAKSLGIETKPVLIGPYTFLKLSRDAEAQELTIDEGLVDAVADVYAEVLRRFAKLGAQWVQLDEPYLVLDKHEGDVSLFKSLYSRLLPARDSGVRVLLNTYFGNIADIYETVKLFEFDGVGLDLIEGRDENLKAVEHHGVAARTTLFAGVVNGRNIWRNNYAESIALVEALQQVTANVAVASACSLLHVPFSTKGEEQLGDKVLRHFAFAVEKLEEVREIADLMQLDDDAKRQSTALAANQALFDGSRVVADEVVRARIAALADADYVRRPERGERQRLQREALGLPLLPTTTIGSFPQTKQVRAERARLRKGEISQGQYDEFIRRQIDDVVAKQEQIGLDVLVHGEFERNDMVEYFGQNLNGFLFTKNAWVQSYGTRCVKPPIIWGDVSRAQPITVAWSSYAQSRTAKPMKGMLTGPVTILNWSWPREDITHEEQTKQLALAIRDEVLDLEKAGIRIIQIDEAALREKLPLRESDWHREYLDWAIPAFRLVHSAVQPSTQIHTHMCYSEFNDIISDIDAMDADVISFEASRGDLVVLDAIHDAHFETEAGPGVYDIHSPRIPSVEETEERIGESLAKMDVNKVWINPDCGLKTRGNDETWPSLTHMVQAAKAMRANLD</sequence>
<name>METE_BIFA0</name>
<organism>
    <name type="scientific">Bifidobacterium animalis subsp. lactis (strain AD011)</name>
    <dbReference type="NCBI Taxonomy" id="442563"/>
    <lineage>
        <taxon>Bacteria</taxon>
        <taxon>Bacillati</taxon>
        <taxon>Actinomycetota</taxon>
        <taxon>Actinomycetes</taxon>
        <taxon>Bifidobacteriales</taxon>
        <taxon>Bifidobacteriaceae</taxon>
        <taxon>Bifidobacterium</taxon>
    </lineage>
</organism>
<feature type="chain" id="PRO_1000123778" description="5-methyltetrahydropteroyltriglutamate--homocysteine methyltransferase">
    <location>
        <begin position="1"/>
        <end position="767"/>
    </location>
</feature>
<feature type="active site" description="Proton donor" evidence="1">
    <location>
        <position position="706"/>
    </location>
</feature>
<feature type="binding site" evidence="1">
    <location>
        <begin position="17"/>
        <end position="20"/>
    </location>
    <ligand>
        <name>5-methyltetrahydropteroyltri-L-glutamate</name>
        <dbReference type="ChEBI" id="CHEBI:58207"/>
    </ligand>
</feature>
<feature type="binding site" evidence="1">
    <location>
        <position position="117"/>
    </location>
    <ligand>
        <name>5-methyltetrahydropteroyltri-L-glutamate</name>
        <dbReference type="ChEBI" id="CHEBI:58207"/>
    </ligand>
</feature>
<feature type="binding site" evidence="1">
    <location>
        <begin position="442"/>
        <end position="444"/>
    </location>
    <ligand>
        <name>L-homocysteine</name>
        <dbReference type="ChEBI" id="CHEBI:58199"/>
    </ligand>
</feature>
<feature type="binding site" evidence="1">
    <location>
        <begin position="442"/>
        <end position="444"/>
    </location>
    <ligand>
        <name>L-methionine</name>
        <dbReference type="ChEBI" id="CHEBI:57844"/>
    </ligand>
</feature>
<feature type="binding site" evidence="1">
    <location>
        <position position="495"/>
    </location>
    <ligand>
        <name>L-homocysteine</name>
        <dbReference type="ChEBI" id="CHEBI:58199"/>
    </ligand>
</feature>
<feature type="binding site" evidence="1">
    <location>
        <position position="495"/>
    </location>
    <ligand>
        <name>L-methionine</name>
        <dbReference type="ChEBI" id="CHEBI:57844"/>
    </ligand>
</feature>
<feature type="binding site" evidence="1">
    <location>
        <begin position="526"/>
        <end position="527"/>
    </location>
    <ligand>
        <name>5-methyltetrahydropteroyltri-L-glutamate</name>
        <dbReference type="ChEBI" id="CHEBI:58207"/>
    </ligand>
</feature>
<feature type="binding site" evidence="1">
    <location>
        <position position="572"/>
    </location>
    <ligand>
        <name>5-methyltetrahydropteroyltri-L-glutamate</name>
        <dbReference type="ChEBI" id="CHEBI:58207"/>
    </ligand>
</feature>
<feature type="binding site" evidence="1">
    <location>
        <position position="610"/>
    </location>
    <ligand>
        <name>L-homocysteine</name>
        <dbReference type="ChEBI" id="CHEBI:58199"/>
    </ligand>
</feature>
<feature type="binding site" evidence="1">
    <location>
        <position position="610"/>
    </location>
    <ligand>
        <name>L-methionine</name>
        <dbReference type="ChEBI" id="CHEBI:57844"/>
    </ligand>
</feature>
<feature type="binding site" evidence="1">
    <location>
        <position position="616"/>
    </location>
    <ligand>
        <name>5-methyltetrahydropteroyltri-L-glutamate</name>
        <dbReference type="ChEBI" id="CHEBI:58207"/>
    </ligand>
</feature>
<feature type="binding site" evidence="1">
    <location>
        <position position="653"/>
    </location>
    <ligand>
        <name>Zn(2+)</name>
        <dbReference type="ChEBI" id="CHEBI:29105"/>
        <note>catalytic</note>
    </ligand>
</feature>
<feature type="binding site" evidence="1">
    <location>
        <position position="655"/>
    </location>
    <ligand>
        <name>Zn(2+)</name>
        <dbReference type="ChEBI" id="CHEBI:29105"/>
        <note>catalytic</note>
    </ligand>
</feature>
<feature type="binding site" evidence="1">
    <location>
        <position position="677"/>
    </location>
    <ligand>
        <name>Zn(2+)</name>
        <dbReference type="ChEBI" id="CHEBI:29105"/>
        <note>catalytic</note>
    </ligand>
</feature>
<feature type="binding site" evidence="1">
    <location>
        <position position="738"/>
    </location>
    <ligand>
        <name>Zn(2+)</name>
        <dbReference type="ChEBI" id="CHEBI:29105"/>
        <note>catalytic</note>
    </ligand>
</feature>
<protein>
    <recommendedName>
        <fullName evidence="1">5-methyltetrahydropteroyltriglutamate--homocysteine methyltransferase</fullName>
        <ecNumber evidence="1">2.1.1.14</ecNumber>
    </recommendedName>
    <alternativeName>
        <fullName evidence="1">Cobalamin-independent methionine synthase</fullName>
    </alternativeName>
    <alternativeName>
        <fullName evidence="1">Methionine synthase, vitamin-B12 independent isozyme</fullName>
    </alternativeName>
</protein>
<evidence type="ECO:0000255" key="1">
    <source>
        <dbReference type="HAMAP-Rule" id="MF_00172"/>
    </source>
</evidence>
<gene>
    <name evidence="1" type="primary">metE</name>
    <name type="ordered locus">BLA_1400</name>
</gene>
<comment type="function">
    <text evidence="1">Catalyzes the transfer of a methyl group from 5-methyltetrahydrofolate to homocysteine resulting in methionine formation.</text>
</comment>
<comment type="catalytic activity">
    <reaction evidence="1">
        <text>5-methyltetrahydropteroyltri-L-glutamate + L-homocysteine = tetrahydropteroyltri-L-glutamate + L-methionine</text>
        <dbReference type="Rhea" id="RHEA:21196"/>
        <dbReference type="ChEBI" id="CHEBI:57844"/>
        <dbReference type="ChEBI" id="CHEBI:58140"/>
        <dbReference type="ChEBI" id="CHEBI:58199"/>
        <dbReference type="ChEBI" id="CHEBI:58207"/>
        <dbReference type="EC" id="2.1.1.14"/>
    </reaction>
</comment>
<comment type="cofactor">
    <cofactor evidence="1">
        <name>Zn(2+)</name>
        <dbReference type="ChEBI" id="CHEBI:29105"/>
    </cofactor>
    <text evidence="1">Binds 1 zinc ion per subunit.</text>
</comment>
<comment type="pathway">
    <text evidence="1">Amino-acid biosynthesis; L-methionine biosynthesis via de novo pathway; L-methionine from L-homocysteine (MetE route): step 1/1.</text>
</comment>
<comment type="similarity">
    <text evidence="1">Belongs to the vitamin-B12 independent methionine synthase family.</text>
</comment>
<keyword id="KW-0028">Amino-acid biosynthesis</keyword>
<keyword id="KW-0479">Metal-binding</keyword>
<keyword id="KW-0486">Methionine biosynthesis</keyword>
<keyword id="KW-0489">Methyltransferase</keyword>
<keyword id="KW-1185">Reference proteome</keyword>
<keyword id="KW-0677">Repeat</keyword>
<keyword id="KW-0808">Transferase</keyword>
<keyword id="KW-0862">Zinc</keyword>
<dbReference type="EC" id="2.1.1.14" evidence="1"/>
<dbReference type="EMBL" id="CP001213">
    <property type="protein sequence ID" value="ACL29685.1"/>
    <property type="molecule type" value="Genomic_DNA"/>
</dbReference>
<dbReference type="RefSeq" id="WP_015940177.1">
    <property type="nucleotide sequence ID" value="NC_011835.1"/>
</dbReference>
<dbReference type="SMR" id="B8DUK6"/>
<dbReference type="STRING" id="442563.BLA_1400"/>
<dbReference type="KEGG" id="bla:BLA_1400"/>
<dbReference type="PATRIC" id="fig|442563.4.peg.1464"/>
<dbReference type="HOGENOM" id="CLU_013175_0_0_11"/>
<dbReference type="UniPathway" id="UPA00051">
    <property type="reaction ID" value="UER00082"/>
</dbReference>
<dbReference type="Proteomes" id="UP000002456">
    <property type="component" value="Chromosome"/>
</dbReference>
<dbReference type="GO" id="GO:0003871">
    <property type="term" value="F:5-methyltetrahydropteroyltriglutamate-homocysteine S-methyltransferase activity"/>
    <property type="evidence" value="ECO:0007669"/>
    <property type="project" value="UniProtKB-UniRule"/>
</dbReference>
<dbReference type="GO" id="GO:0008270">
    <property type="term" value="F:zinc ion binding"/>
    <property type="evidence" value="ECO:0007669"/>
    <property type="project" value="InterPro"/>
</dbReference>
<dbReference type="GO" id="GO:0009086">
    <property type="term" value="P:methionine biosynthetic process"/>
    <property type="evidence" value="ECO:0007669"/>
    <property type="project" value="UniProtKB-UniRule"/>
</dbReference>
<dbReference type="GO" id="GO:0032259">
    <property type="term" value="P:methylation"/>
    <property type="evidence" value="ECO:0007669"/>
    <property type="project" value="UniProtKB-KW"/>
</dbReference>
<dbReference type="CDD" id="cd03311">
    <property type="entry name" value="CIMS_C_terminal_like"/>
    <property type="match status" value="1"/>
</dbReference>
<dbReference type="CDD" id="cd03312">
    <property type="entry name" value="CIMS_N_terminal_like"/>
    <property type="match status" value="1"/>
</dbReference>
<dbReference type="Gene3D" id="3.20.20.210">
    <property type="match status" value="2"/>
</dbReference>
<dbReference type="HAMAP" id="MF_00172">
    <property type="entry name" value="Meth_synth"/>
    <property type="match status" value="1"/>
</dbReference>
<dbReference type="InterPro" id="IPR013215">
    <property type="entry name" value="Cbl-indep_Met_Synth_N"/>
</dbReference>
<dbReference type="InterPro" id="IPR006276">
    <property type="entry name" value="Cobalamin-indep_Met_synthase"/>
</dbReference>
<dbReference type="InterPro" id="IPR002629">
    <property type="entry name" value="Met_Synth_C/arc"/>
</dbReference>
<dbReference type="InterPro" id="IPR038071">
    <property type="entry name" value="UROD/MetE-like_sf"/>
</dbReference>
<dbReference type="NCBIfam" id="TIGR01371">
    <property type="entry name" value="met_syn_B12ind"/>
    <property type="match status" value="1"/>
</dbReference>
<dbReference type="NCBIfam" id="NF003556">
    <property type="entry name" value="PRK05222.1"/>
    <property type="match status" value="1"/>
</dbReference>
<dbReference type="PANTHER" id="PTHR30519">
    <property type="entry name" value="5-METHYLTETRAHYDROPTEROYLTRIGLUTAMATE--HOMOCYSTEINE METHYLTRANSFERASE"/>
    <property type="match status" value="1"/>
</dbReference>
<dbReference type="Pfam" id="PF08267">
    <property type="entry name" value="Meth_synt_1"/>
    <property type="match status" value="1"/>
</dbReference>
<dbReference type="Pfam" id="PF01717">
    <property type="entry name" value="Meth_synt_2"/>
    <property type="match status" value="1"/>
</dbReference>
<dbReference type="PIRSF" id="PIRSF000382">
    <property type="entry name" value="MeTrfase_B12_ind"/>
    <property type="match status" value="1"/>
</dbReference>
<dbReference type="SUPFAM" id="SSF51726">
    <property type="entry name" value="UROD/MetE-like"/>
    <property type="match status" value="2"/>
</dbReference>
<accession>B8DUK6</accession>
<reference key="1">
    <citation type="journal article" date="2009" name="J. Bacteriol.">
        <title>Genome sequence of the probiotic bacterium Bifidobacterium animalis subsp. lactis AD011.</title>
        <authorList>
            <person name="Kim J.F."/>
            <person name="Jeong H."/>
            <person name="Yu D.S."/>
            <person name="Choi S.-H."/>
            <person name="Hur C.-G."/>
            <person name="Park M.-S."/>
            <person name="Yoon S.H."/>
            <person name="Kim D.-W."/>
            <person name="Ji G.E."/>
            <person name="Park H.-S."/>
            <person name="Oh T.K."/>
        </authorList>
    </citation>
    <scope>NUCLEOTIDE SEQUENCE [LARGE SCALE GENOMIC DNA]</scope>
    <source>
        <strain>AD011</strain>
    </source>
</reference>
<proteinExistence type="inferred from homology"/>